<gene>
    <name type="ordered locus">Os04g0581400</name>
    <name type="ordered locus">LOC_Os04g49230</name>
    <name type="ORF">OSJNBa0088A01.1</name>
</gene>
<dbReference type="EMBL" id="AL662987">
    <property type="protein sequence ID" value="CAE04153.1"/>
    <property type="status" value="ALT_INIT"/>
    <property type="molecule type" value="Genomic_DNA"/>
</dbReference>
<dbReference type="EMBL" id="AP014960">
    <property type="status" value="NOT_ANNOTATED_CDS"/>
    <property type="molecule type" value="Genomic_DNA"/>
</dbReference>
<dbReference type="SMR" id="Q7F9W2"/>
<dbReference type="FunCoup" id="Q7F9W2">
    <property type="interactions" value="25"/>
</dbReference>
<dbReference type="PaxDb" id="39947-Q7F9W2"/>
<dbReference type="eggNOG" id="ENOG502QSHQ">
    <property type="taxonomic scope" value="Eukaryota"/>
</dbReference>
<dbReference type="HOGENOM" id="CLU_951193_0_0_1"/>
<dbReference type="InParanoid" id="Q7F9W2"/>
<dbReference type="Proteomes" id="UP000000763">
    <property type="component" value="Chromosome 4"/>
</dbReference>
<dbReference type="Proteomes" id="UP000059680">
    <property type="component" value="Chromosome 4"/>
</dbReference>
<dbReference type="GO" id="GO:0005634">
    <property type="term" value="C:nucleus"/>
    <property type="evidence" value="ECO:0007669"/>
    <property type="project" value="UniProtKB-SubCell"/>
</dbReference>
<dbReference type="GO" id="GO:0003677">
    <property type="term" value="F:DNA binding"/>
    <property type="evidence" value="ECO:0007669"/>
    <property type="project" value="UniProtKB-KW"/>
</dbReference>
<dbReference type="GO" id="GO:0003700">
    <property type="term" value="F:DNA-binding transcription factor activity"/>
    <property type="evidence" value="ECO:0007669"/>
    <property type="project" value="InterPro"/>
</dbReference>
<dbReference type="CDD" id="cd10017">
    <property type="entry name" value="B3_DNA"/>
    <property type="match status" value="1"/>
</dbReference>
<dbReference type="FunFam" id="2.40.330.10:FF:000002">
    <property type="entry name" value="B3 domain-containing protein"/>
    <property type="match status" value="1"/>
</dbReference>
<dbReference type="Gene3D" id="2.40.330.10">
    <property type="entry name" value="DNA-binding pseudobarrel domain"/>
    <property type="match status" value="1"/>
</dbReference>
<dbReference type="InterPro" id="IPR003340">
    <property type="entry name" value="B3_DNA-bd"/>
</dbReference>
<dbReference type="InterPro" id="IPR015300">
    <property type="entry name" value="DNA-bd_pseudobarrel_sf"/>
</dbReference>
<dbReference type="InterPro" id="IPR044800">
    <property type="entry name" value="LEC2-like"/>
</dbReference>
<dbReference type="PANTHER" id="PTHR31140">
    <property type="entry name" value="B3 DOMAIN-CONTAINING TRANSCRIPTION FACTOR ABI3"/>
    <property type="match status" value="1"/>
</dbReference>
<dbReference type="PANTHER" id="PTHR31140:SF2">
    <property type="entry name" value="B3 DOMAIN-CONTAINING TRANSCRIPTION FACTOR NGA2"/>
    <property type="match status" value="1"/>
</dbReference>
<dbReference type="Pfam" id="PF02362">
    <property type="entry name" value="B3"/>
    <property type="match status" value="1"/>
</dbReference>
<dbReference type="SMART" id="SM01019">
    <property type="entry name" value="B3"/>
    <property type="match status" value="1"/>
</dbReference>
<dbReference type="SUPFAM" id="SSF101936">
    <property type="entry name" value="DNA-binding pseudobarrel domain"/>
    <property type="match status" value="1"/>
</dbReference>
<dbReference type="PROSITE" id="PS50863">
    <property type="entry name" value="B3"/>
    <property type="match status" value="1"/>
</dbReference>
<name>Y4814_ORYSJ</name>
<sequence>MEFATTSSRFSKEEEEEEEGEQEMEQEQDEEEEEAEASPREIPFMTSAAAAATASSSSPTSVSPSATASAAASTSASGSPFRSSDGAGASGSGGGGGGEDVEVIEKEHMFDKVVTPSDVGKLNRLVIPKQHAEKYFPLDSAANEKGLLLSFEDRTGKLWRFRYSYWNSSQSYVMTKGWSRFVKEKRLDAGDTVSFCRGAAEATRDRLFIDWKRRADVRDPHRFQRLPLPMTSPYGPWGGGAGASSCRPRRPPRSTSITAFARASTSATSTPLCRRGSSSSSAPQGRGFISTRPCHRRRRHLRLLTNSTLRCTTRAP</sequence>
<protein>
    <recommendedName>
        <fullName>B3 domain-containing protein Os04g0581400</fullName>
    </recommendedName>
</protein>
<organism>
    <name type="scientific">Oryza sativa subsp. japonica</name>
    <name type="common">Rice</name>
    <dbReference type="NCBI Taxonomy" id="39947"/>
    <lineage>
        <taxon>Eukaryota</taxon>
        <taxon>Viridiplantae</taxon>
        <taxon>Streptophyta</taxon>
        <taxon>Embryophyta</taxon>
        <taxon>Tracheophyta</taxon>
        <taxon>Spermatophyta</taxon>
        <taxon>Magnoliopsida</taxon>
        <taxon>Liliopsida</taxon>
        <taxon>Poales</taxon>
        <taxon>Poaceae</taxon>
        <taxon>BOP clade</taxon>
        <taxon>Oryzoideae</taxon>
        <taxon>Oryzeae</taxon>
        <taxon>Oryzinae</taxon>
        <taxon>Oryza</taxon>
        <taxon>Oryza sativa</taxon>
    </lineage>
</organism>
<feature type="chain" id="PRO_0000376967" description="B3 domain-containing protein Os04g0581400">
    <location>
        <begin position="1"/>
        <end position="316"/>
    </location>
</feature>
<feature type="DNA-binding region" description="TF-B3" evidence="1">
    <location>
        <begin position="110"/>
        <end position="215"/>
    </location>
</feature>
<feature type="region of interest" description="Disordered" evidence="2">
    <location>
        <begin position="1"/>
        <end position="100"/>
    </location>
</feature>
<feature type="region of interest" description="Disordered" evidence="2">
    <location>
        <begin position="239"/>
        <end position="290"/>
    </location>
</feature>
<feature type="compositionally biased region" description="Acidic residues" evidence="2">
    <location>
        <begin position="13"/>
        <end position="36"/>
    </location>
</feature>
<feature type="compositionally biased region" description="Low complexity" evidence="2">
    <location>
        <begin position="46"/>
        <end position="77"/>
    </location>
</feature>
<feature type="compositionally biased region" description="Gly residues" evidence="2">
    <location>
        <begin position="88"/>
        <end position="98"/>
    </location>
</feature>
<feature type="compositionally biased region" description="Low complexity" evidence="2">
    <location>
        <begin position="253"/>
        <end position="270"/>
    </location>
</feature>
<evidence type="ECO:0000255" key="1">
    <source>
        <dbReference type="PROSITE-ProRule" id="PRU00326"/>
    </source>
</evidence>
<evidence type="ECO:0000256" key="2">
    <source>
        <dbReference type="SAM" id="MobiDB-lite"/>
    </source>
</evidence>
<evidence type="ECO:0000305" key="3"/>
<comment type="subcellular location">
    <subcellularLocation>
        <location evidence="1">Nucleus</location>
    </subcellularLocation>
</comment>
<comment type="sequence caution" evidence="3">
    <conflict type="erroneous initiation">
        <sequence resource="EMBL-CDS" id="CAE04153"/>
    </conflict>
</comment>
<accession>Q7F9W2</accession>
<proteinExistence type="inferred from homology"/>
<keyword id="KW-0238">DNA-binding</keyword>
<keyword id="KW-0539">Nucleus</keyword>
<keyword id="KW-1185">Reference proteome</keyword>
<keyword id="KW-0804">Transcription</keyword>
<keyword id="KW-0805">Transcription regulation</keyword>
<reference key="1">
    <citation type="journal article" date="2002" name="Nature">
        <title>Sequence and analysis of rice chromosome 4.</title>
        <authorList>
            <person name="Feng Q."/>
            <person name="Zhang Y."/>
            <person name="Hao P."/>
            <person name="Wang S."/>
            <person name="Fu G."/>
            <person name="Huang Y."/>
            <person name="Li Y."/>
            <person name="Zhu J."/>
            <person name="Liu Y."/>
            <person name="Hu X."/>
            <person name="Jia P."/>
            <person name="Zhang Y."/>
            <person name="Zhao Q."/>
            <person name="Ying K."/>
            <person name="Yu S."/>
            <person name="Tang Y."/>
            <person name="Weng Q."/>
            <person name="Zhang L."/>
            <person name="Lu Y."/>
            <person name="Mu J."/>
            <person name="Lu Y."/>
            <person name="Zhang L.S."/>
            <person name="Yu Z."/>
            <person name="Fan D."/>
            <person name="Liu X."/>
            <person name="Lu T."/>
            <person name="Li C."/>
            <person name="Wu Y."/>
            <person name="Sun T."/>
            <person name="Lei H."/>
            <person name="Li T."/>
            <person name="Hu H."/>
            <person name="Guan J."/>
            <person name="Wu M."/>
            <person name="Zhang R."/>
            <person name="Zhou B."/>
            <person name="Chen Z."/>
            <person name="Chen L."/>
            <person name="Jin Z."/>
            <person name="Wang R."/>
            <person name="Yin H."/>
            <person name="Cai Z."/>
            <person name="Ren S."/>
            <person name="Lv G."/>
            <person name="Gu W."/>
            <person name="Zhu G."/>
            <person name="Tu Y."/>
            <person name="Jia J."/>
            <person name="Zhang Y."/>
            <person name="Chen J."/>
            <person name="Kang H."/>
            <person name="Chen X."/>
            <person name="Shao C."/>
            <person name="Sun Y."/>
            <person name="Hu Q."/>
            <person name="Zhang X."/>
            <person name="Zhang W."/>
            <person name="Wang L."/>
            <person name="Ding C."/>
            <person name="Sheng H."/>
            <person name="Gu J."/>
            <person name="Chen S."/>
            <person name="Ni L."/>
            <person name="Zhu F."/>
            <person name="Chen W."/>
            <person name="Lan L."/>
            <person name="Lai Y."/>
            <person name="Cheng Z."/>
            <person name="Gu M."/>
            <person name="Jiang J."/>
            <person name="Li J."/>
            <person name="Hong G."/>
            <person name="Xue Y."/>
            <person name="Han B."/>
        </authorList>
    </citation>
    <scope>NUCLEOTIDE SEQUENCE [LARGE SCALE GENOMIC DNA]</scope>
    <source>
        <strain>cv. Nipponbare</strain>
    </source>
</reference>
<reference key="2">
    <citation type="journal article" date="2005" name="Nature">
        <title>The map-based sequence of the rice genome.</title>
        <authorList>
            <consortium name="International rice genome sequencing project (IRGSP)"/>
        </authorList>
    </citation>
    <scope>NUCLEOTIDE SEQUENCE [LARGE SCALE GENOMIC DNA]</scope>
    <source>
        <strain>cv. Nipponbare</strain>
    </source>
</reference>
<reference key="3">
    <citation type="journal article" date="2013" name="Rice">
        <title>Improvement of the Oryza sativa Nipponbare reference genome using next generation sequence and optical map data.</title>
        <authorList>
            <person name="Kawahara Y."/>
            <person name="de la Bastide M."/>
            <person name="Hamilton J.P."/>
            <person name="Kanamori H."/>
            <person name="McCombie W.R."/>
            <person name="Ouyang S."/>
            <person name="Schwartz D.C."/>
            <person name="Tanaka T."/>
            <person name="Wu J."/>
            <person name="Zhou S."/>
            <person name="Childs K.L."/>
            <person name="Davidson R.M."/>
            <person name="Lin H."/>
            <person name="Quesada-Ocampo L."/>
            <person name="Vaillancourt B."/>
            <person name="Sakai H."/>
            <person name="Lee S.S."/>
            <person name="Kim J."/>
            <person name="Numa H."/>
            <person name="Itoh T."/>
            <person name="Buell C.R."/>
            <person name="Matsumoto T."/>
        </authorList>
    </citation>
    <scope>GENOME REANNOTATION</scope>
    <source>
        <strain>cv. Nipponbare</strain>
    </source>
</reference>